<sequence length="211" mass="23150">MHISMFDFSIYIKFFVSLCALVNPIGMIPIFTTMTNHQSHLERKKTNLVANFSAFIILLISLFAGNSILNAFGISINSFRIAGGILIISIAFSMISGKFTKNNKTSKEKNQENISVVPLAMPLIAGPGAISSTIVWSTYYSTWSDFLGCSIAIFLFAFVCWLCFRAAPCVVEILGKTGINIITRIMGLLLMSLGIEFLSIGIKSIFSALLH</sequence>
<feature type="chain" id="PRO_0000156908" description="UPF0056 membrane protein BUsg_257">
    <location>
        <begin position="1"/>
        <end position="211"/>
    </location>
</feature>
<feature type="transmembrane region" description="Helical" evidence="1">
    <location>
        <begin position="14"/>
        <end position="34"/>
    </location>
</feature>
<feature type="transmembrane region" description="Helical" evidence="1">
    <location>
        <begin position="54"/>
        <end position="74"/>
    </location>
</feature>
<feature type="transmembrane region" description="Helical" evidence="1">
    <location>
        <begin position="76"/>
        <end position="96"/>
    </location>
</feature>
<feature type="transmembrane region" description="Helical" evidence="1">
    <location>
        <begin position="116"/>
        <end position="136"/>
    </location>
</feature>
<feature type="transmembrane region" description="Helical" evidence="1">
    <location>
        <begin position="144"/>
        <end position="164"/>
    </location>
</feature>
<feature type="transmembrane region" description="Helical" evidence="1">
    <location>
        <begin position="185"/>
        <end position="205"/>
    </location>
</feature>
<reference key="1">
    <citation type="journal article" date="2002" name="Science">
        <title>50 million years of genomic stasis in endosymbiotic bacteria.</title>
        <authorList>
            <person name="Tamas I."/>
            <person name="Klasson L."/>
            <person name="Canbaeck B."/>
            <person name="Naeslund A.K."/>
            <person name="Eriksson A.-S."/>
            <person name="Wernegreen J.J."/>
            <person name="Sandstroem J.P."/>
            <person name="Moran N.A."/>
            <person name="Andersson S.G.E."/>
        </authorList>
    </citation>
    <scope>NUCLEOTIDE SEQUENCE [LARGE SCALE GENOMIC DNA]</scope>
    <source>
        <strain>Sg</strain>
    </source>
</reference>
<accession>Q8K9Q4</accession>
<evidence type="ECO:0000255" key="1"/>
<evidence type="ECO:0000305" key="2"/>
<name>Y257_BUCAP</name>
<dbReference type="EMBL" id="AE013218">
    <property type="protein sequence ID" value="AAM67815.1"/>
    <property type="molecule type" value="Genomic_DNA"/>
</dbReference>
<dbReference type="RefSeq" id="WP_011053782.1">
    <property type="nucleotide sequence ID" value="NC_004061.1"/>
</dbReference>
<dbReference type="STRING" id="198804.BUsg_257"/>
<dbReference type="GeneID" id="93003727"/>
<dbReference type="KEGG" id="bas:BUsg_257"/>
<dbReference type="eggNOG" id="COG2095">
    <property type="taxonomic scope" value="Bacteria"/>
</dbReference>
<dbReference type="HOGENOM" id="CLU_079909_2_1_6"/>
<dbReference type="Proteomes" id="UP000000416">
    <property type="component" value="Chromosome"/>
</dbReference>
<dbReference type="GO" id="GO:0005886">
    <property type="term" value="C:plasma membrane"/>
    <property type="evidence" value="ECO:0007669"/>
    <property type="project" value="UniProtKB-SubCell"/>
</dbReference>
<dbReference type="InterPro" id="IPR002771">
    <property type="entry name" value="Multi_antbiot-R_MarC"/>
</dbReference>
<dbReference type="NCBIfam" id="TIGR00427">
    <property type="entry name" value="NAAT family transporter"/>
    <property type="match status" value="1"/>
</dbReference>
<dbReference type="NCBIfam" id="NF008320">
    <property type="entry name" value="PRK11111.1"/>
    <property type="match status" value="1"/>
</dbReference>
<dbReference type="PANTHER" id="PTHR33508">
    <property type="entry name" value="UPF0056 MEMBRANE PROTEIN YHCE"/>
    <property type="match status" value="1"/>
</dbReference>
<dbReference type="PANTHER" id="PTHR33508:SF1">
    <property type="entry name" value="UPF0056 MEMBRANE PROTEIN YHCE"/>
    <property type="match status" value="1"/>
</dbReference>
<dbReference type="Pfam" id="PF01914">
    <property type="entry name" value="MarC"/>
    <property type="match status" value="1"/>
</dbReference>
<protein>
    <recommendedName>
        <fullName>UPF0056 membrane protein BUsg_257</fullName>
    </recommendedName>
</protein>
<comment type="subcellular location">
    <subcellularLocation>
        <location evidence="2">Cell membrane</location>
        <topology evidence="2">Multi-pass membrane protein</topology>
    </subcellularLocation>
</comment>
<comment type="similarity">
    <text evidence="2">Belongs to the UPF0056 (MarC) family.</text>
</comment>
<organism>
    <name type="scientific">Buchnera aphidicola subsp. Schizaphis graminum (strain Sg)</name>
    <dbReference type="NCBI Taxonomy" id="198804"/>
    <lineage>
        <taxon>Bacteria</taxon>
        <taxon>Pseudomonadati</taxon>
        <taxon>Pseudomonadota</taxon>
        <taxon>Gammaproteobacteria</taxon>
        <taxon>Enterobacterales</taxon>
        <taxon>Erwiniaceae</taxon>
        <taxon>Buchnera</taxon>
    </lineage>
</organism>
<gene>
    <name type="ordered locus">BUsg_257</name>
</gene>
<proteinExistence type="inferred from homology"/>
<keyword id="KW-1003">Cell membrane</keyword>
<keyword id="KW-0472">Membrane</keyword>
<keyword id="KW-0812">Transmembrane</keyword>
<keyword id="KW-1133">Transmembrane helix</keyword>